<evidence type="ECO:0000255" key="1"/>
<evidence type="ECO:0000269" key="2">
    <source>
    </source>
</evidence>
<evidence type="ECO:0000269" key="3">
    <source>
    </source>
</evidence>
<evidence type="ECO:0000305" key="4"/>
<proteinExistence type="evidence at protein level"/>
<organism>
    <name type="scientific">Bacillus subtilis (strain 168)</name>
    <dbReference type="NCBI Taxonomy" id="224308"/>
    <lineage>
        <taxon>Bacteria</taxon>
        <taxon>Bacillati</taxon>
        <taxon>Bacillota</taxon>
        <taxon>Bacilli</taxon>
        <taxon>Bacillales</taxon>
        <taxon>Bacillaceae</taxon>
        <taxon>Bacillus</taxon>
    </lineage>
</organism>
<sequence length="113" mass="12060">MDQEAGFMVNFINSYFIALGVLIGGALIGGLGAYLAGEPPLTAITKLANRLKIWALVAAIGGTFDAVYSFERGILEGNTRDIFKQLLLIISAMGGAQSGWLIISWLTQEHLSS</sequence>
<dbReference type="EMBL" id="AL009126">
    <property type="protein sequence ID" value="CAX52677.1"/>
    <property type="molecule type" value="Genomic_DNA"/>
</dbReference>
<dbReference type="RefSeq" id="WP_003229410.1">
    <property type="nucleotide sequence ID" value="NZ_OZ025638.1"/>
</dbReference>
<dbReference type="RefSeq" id="YP_003097771.1">
    <property type="nucleotide sequence ID" value="NC_000964.3"/>
</dbReference>
<dbReference type="FunCoup" id="C0H3P8">
    <property type="interactions" value="40"/>
</dbReference>
<dbReference type="STRING" id="224308.BSU29239"/>
<dbReference type="PaxDb" id="224308-BSU29239"/>
<dbReference type="EnsemblBacteria" id="CAX52677">
    <property type="protein sequence ID" value="CAX52677"/>
    <property type="gene ID" value="BSU_29239"/>
</dbReference>
<dbReference type="GeneID" id="8303067"/>
<dbReference type="GeneID" id="86872559"/>
<dbReference type="KEGG" id="bsu:BSU29239"/>
<dbReference type="PATRIC" id="fig|224308.179.peg.3175"/>
<dbReference type="eggNOG" id="ENOG50330BE">
    <property type="taxonomic scope" value="Bacteria"/>
</dbReference>
<dbReference type="InParanoid" id="C0H3P8"/>
<dbReference type="OrthoDB" id="2381692at2"/>
<dbReference type="BioCyc" id="BSUB:BSU29239-MONOMER"/>
<dbReference type="Proteomes" id="UP000001570">
    <property type="component" value="Chromosome"/>
</dbReference>
<dbReference type="GO" id="GO:0016020">
    <property type="term" value="C:membrane"/>
    <property type="evidence" value="ECO:0007669"/>
    <property type="project" value="UniProtKB-KW"/>
</dbReference>
<dbReference type="GO" id="GO:0030435">
    <property type="term" value="P:sporulation resulting in formation of a cellular spore"/>
    <property type="evidence" value="ECO:0007669"/>
    <property type="project" value="UniProtKB-KW"/>
</dbReference>
<dbReference type="InterPro" id="IPR025689">
    <property type="entry name" value="Spore_YtrH"/>
</dbReference>
<dbReference type="Pfam" id="PF14034">
    <property type="entry name" value="Spore_YtrH"/>
    <property type="match status" value="1"/>
</dbReference>
<accession>C0H3P8</accession>
<feature type="chain" id="PRO_0000387957" description="Sporulation membrane protein YtrH">
    <location>
        <begin position="1"/>
        <end position="113"/>
    </location>
</feature>
<feature type="transmembrane region" description="Helical" evidence="1">
    <location>
        <begin position="16"/>
        <end position="36"/>
    </location>
</feature>
<feature type="transmembrane region" description="Helical" evidence="1">
    <location>
        <begin position="51"/>
        <end position="71"/>
    </location>
</feature>
<feature type="transmembrane region" description="Helical" evidence="1">
    <location>
        <begin position="86"/>
        <end position="106"/>
    </location>
</feature>
<gene>
    <name type="primary">ytrH</name>
    <name type="synonym">spoVIGA</name>
    <name type="ordered locus">BSU29239</name>
</gene>
<comment type="function">
    <text evidence="3">Involved in sporulation. May contribute to cortex formation or stability.</text>
</comment>
<comment type="subcellular location">
    <subcellularLocation>
        <location evidence="4">Forespore outer membrane</location>
        <topology evidence="4">Multi-pass membrane protein</topology>
    </subcellularLocation>
    <text evidence="2">Shortly after the initiation of the engulfment, is localized to the sporulation septum. During later stages of sporulation, remains associated with the forespore outer membrane.</text>
</comment>
<comment type="induction">
    <text evidence="2">Transcriptionally regulated by sigma-E.</text>
</comment>
<comment type="disruption phenotype">
    <text evidence="3">Impaired ability to form spores when associated with a ytrI deletion. In combination with a ybaN deletion, cells show a severe sporulation defect.</text>
</comment>
<keyword id="KW-0472">Membrane</keyword>
<keyword id="KW-1185">Reference proteome</keyword>
<keyword id="KW-0749">Sporulation</keyword>
<keyword id="KW-0812">Transmembrane</keyword>
<keyword id="KW-1133">Transmembrane helix</keyword>
<name>YTRH_BACSU</name>
<protein>
    <recommendedName>
        <fullName>Sporulation membrane protein YtrH</fullName>
    </recommendedName>
</protein>
<reference key="1">
    <citation type="journal article" date="1997" name="Nature">
        <title>The complete genome sequence of the Gram-positive bacterium Bacillus subtilis.</title>
        <authorList>
            <person name="Kunst F."/>
            <person name="Ogasawara N."/>
            <person name="Moszer I."/>
            <person name="Albertini A.M."/>
            <person name="Alloni G."/>
            <person name="Azevedo V."/>
            <person name="Bertero M.G."/>
            <person name="Bessieres P."/>
            <person name="Bolotin A."/>
            <person name="Borchert S."/>
            <person name="Borriss R."/>
            <person name="Boursier L."/>
            <person name="Brans A."/>
            <person name="Braun M."/>
            <person name="Brignell S.C."/>
            <person name="Bron S."/>
            <person name="Brouillet S."/>
            <person name="Bruschi C.V."/>
            <person name="Caldwell B."/>
            <person name="Capuano V."/>
            <person name="Carter N.M."/>
            <person name="Choi S.-K."/>
            <person name="Codani J.-J."/>
            <person name="Connerton I.F."/>
            <person name="Cummings N.J."/>
            <person name="Daniel R.A."/>
            <person name="Denizot F."/>
            <person name="Devine K.M."/>
            <person name="Duesterhoeft A."/>
            <person name="Ehrlich S.D."/>
            <person name="Emmerson P.T."/>
            <person name="Entian K.-D."/>
            <person name="Errington J."/>
            <person name="Fabret C."/>
            <person name="Ferrari E."/>
            <person name="Foulger D."/>
            <person name="Fritz C."/>
            <person name="Fujita M."/>
            <person name="Fujita Y."/>
            <person name="Fuma S."/>
            <person name="Galizzi A."/>
            <person name="Galleron N."/>
            <person name="Ghim S.-Y."/>
            <person name="Glaser P."/>
            <person name="Goffeau A."/>
            <person name="Golightly E.J."/>
            <person name="Grandi G."/>
            <person name="Guiseppi G."/>
            <person name="Guy B.J."/>
            <person name="Haga K."/>
            <person name="Haiech J."/>
            <person name="Harwood C.R."/>
            <person name="Henaut A."/>
            <person name="Hilbert H."/>
            <person name="Holsappel S."/>
            <person name="Hosono S."/>
            <person name="Hullo M.-F."/>
            <person name="Itaya M."/>
            <person name="Jones L.-M."/>
            <person name="Joris B."/>
            <person name="Karamata D."/>
            <person name="Kasahara Y."/>
            <person name="Klaerr-Blanchard M."/>
            <person name="Klein C."/>
            <person name="Kobayashi Y."/>
            <person name="Koetter P."/>
            <person name="Koningstein G."/>
            <person name="Krogh S."/>
            <person name="Kumano M."/>
            <person name="Kurita K."/>
            <person name="Lapidus A."/>
            <person name="Lardinois S."/>
            <person name="Lauber J."/>
            <person name="Lazarevic V."/>
            <person name="Lee S.-M."/>
            <person name="Levine A."/>
            <person name="Liu H."/>
            <person name="Masuda S."/>
            <person name="Mauel C."/>
            <person name="Medigue C."/>
            <person name="Medina N."/>
            <person name="Mellado R.P."/>
            <person name="Mizuno M."/>
            <person name="Moestl D."/>
            <person name="Nakai S."/>
            <person name="Noback M."/>
            <person name="Noone D."/>
            <person name="O'Reilly M."/>
            <person name="Ogawa K."/>
            <person name="Ogiwara A."/>
            <person name="Oudega B."/>
            <person name="Park S.-H."/>
            <person name="Parro V."/>
            <person name="Pohl T.M."/>
            <person name="Portetelle D."/>
            <person name="Porwollik S."/>
            <person name="Prescott A.M."/>
            <person name="Presecan E."/>
            <person name="Pujic P."/>
            <person name="Purnelle B."/>
            <person name="Rapoport G."/>
            <person name="Rey M."/>
            <person name="Reynolds S."/>
            <person name="Rieger M."/>
            <person name="Rivolta C."/>
            <person name="Rocha E."/>
            <person name="Roche B."/>
            <person name="Rose M."/>
            <person name="Sadaie Y."/>
            <person name="Sato T."/>
            <person name="Scanlan E."/>
            <person name="Schleich S."/>
            <person name="Schroeter R."/>
            <person name="Scoffone F."/>
            <person name="Sekiguchi J."/>
            <person name="Sekowska A."/>
            <person name="Seror S.J."/>
            <person name="Serror P."/>
            <person name="Shin B.-S."/>
            <person name="Soldo B."/>
            <person name="Sorokin A."/>
            <person name="Tacconi E."/>
            <person name="Takagi T."/>
            <person name="Takahashi H."/>
            <person name="Takemaru K."/>
            <person name="Takeuchi M."/>
            <person name="Tamakoshi A."/>
            <person name="Tanaka T."/>
            <person name="Terpstra P."/>
            <person name="Tognoni A."/>
            <person name="Tosato V."/>
            <person name="Uchiyama S."/>
            <person name="Vandenbol M."/>
            <person name="Vannier F."/>
            <person name="Vassarotti A."/>
            <person name="Viari A."/>
            <person name="Wambutt R."/>
            <person name="Wedler E."/>
            <person name="Wedler H."/>
            <person name="Weitzenegger T."/>
            <person name="Winters P."/>
            <person name="Wipat A."/>
            <person name="Yamamoto H."/>
            <person name="Yamane K."/>
            <person name="Yasumoto K."/>
            <person name="Yata K."/>
            <person name="Yoshida K."/>
            <person name="Yoshikawa H.-F."/>
            <person name="Zumstein E."/>
            <person name="Yoshikawa H."/>
            <person name="Danchin A."/>
        </authorList>
    </citation>
    <scope>NUCLEOTIDE SEQUENCE [LARGE SCALE GENOMIC DNA]</scope>
    <source>
        <strain>168</strain>
    </source>
</reference>
<reference key="2">
    <citation type="journal article" date="2003" name="J. Mol. Biol.">
        <title>The sigmaE regulon and the identification of additional sporulation genes in Bacillus subtilis.</title>
        <authorList>
            <person name="Eichenberger P."/>
            <person name="Jensen S.T."/>
            <person name="Conlon E.M."/>
            <person name="van Ooij C."/>
            <person name="Silvaggi J."/>
            <person name="Gonzalez-Pastor J.-E."/>
            <person name="Fujita M."/>
            <person name="Ben-Yehuda S."/>
            <person name="Stragier P."/>
            <person name="Liu J.S."/>
            <person name="Losick R."/>
        </authorList>
    </citation>
    <scope>SUBCELLULAR LOCATION</scope>
    <scope>INDUCTION BY SIGMA-E</scope>
    <source>
        <strain>168 / PY79</strain>
    </source>
</reference>
<reference key="3">
    <citation type="journal article" date="2004" name="J. Bacteriol.">
        <title>Unmasking novel sporulation genes in Bacillus subtilis.</title>
        <authorList>
            <person name="Silvaggi J.M."/>
            <person name="Popham D.L."/>
            <person name="Driks A."/>
            <person name="Eichenberger P."/>
            <person name="Losick R."/>
        </authorList>
    </citation>
    <scope>FUNCTION IN SPORULATION</scope>
    <scope>DISRUPTION PHENOTYPE</scope>
    <source>
        <strain>168 / PY79</strain>
    </source>
</reference>